<gene>
    <name type="primary">virB3</name>
    <name type="ordered locus">BQ10540</name>
</gene>
<accession>Q6FYW8</accession>
<accession>Q4L2R0</accession>
<accession>Q8KQC2</accession>
<comment type="function">
    <text>Component of the type IV secretion system VirB/VirD4 which could be a major virulence determinant for subversion of human endothelial cell (HEC) function. VirB3 may play a role in stabilization of pilus structure.</text>
</comment>
<comment type="subunit">
    <text evidence="1">Interacts with the 17 kDa antigen protein that is encoded within the VirB locus.</text>
</comment>
<comment type="subcellular location">
    <subcellularLocation>
        <location evidence="3">Cell outer membrane</location>
        <topology evidence="3">Single-pass membrane protein</topology>
    </subcellularLocation>
</comment>
<comment type="similarity">
    <text evidence="3">Belongs to the virB3 family.</text>
</comment>
<dbReference type="EMBL" id="AY122055">
    <property type="protein sequence ID" value="AAM82236.1"/>
    <property type="molecule type" value="Genomic_DNA"/>
</dbReference>
<dbReference type="EMBL" id="AY216720">
    <property type="protein sequence ID" value="AAM43799.2"/>
    <property type="molecule type" value="Genomic_DNA"/>
</dbReference>
<dbReference type="EMBL" id="BX897700">
    <property type="protein sequence ID" value="CAF26521.1"/>
    <property type="molecule type" value="Genomic_DNA"/>
</dbReference>
<dbReference type="RefSeq" id="WP_011179725.1">
    <property type="nucleotide sequence ID" value="NC_005955.1"/>
</dbReference>
<dbReference type="SMR" id="Q6FYW8"/>
<dbReference type="KEGG" id="bqu:BQ10540"/>
<dbReference type="eggNOG" id="COG3702">
    <property type="taxonomic scope" value="Bacteria"/>
</dbReference>
<dbReference type="HOGENOM" id="CLU_158477_1_0_5"/>
<dbReference type="OrthoDB" id="9799932at2"/>
<dbReference type="Proteomes" id="UP000000597">
    <property type="component" value="Chromosome"/>
</dbReference>
<dbReference type="GO" id="GO:0009279">
    <property type="term" value="C:cell outer membrane"/>
    <property type="evidence" value="ECO:0007669"/>
    <property type="project" value="UniProtKB-SubCell"/>
</dbReference>
<dbReference type="InterPro" id="IPR007792">
    <property type="entry name" value="T4SS_VirB3/TrbD/AvhB"/>
</dbReference>
<dbReference type="Pfam" id="PF05101">
    <property type="entry name" value="VirB3"/>
    <property type="match status" value="1"/>
</dbReference>
<name>VIRB3_BARQU</name>
<keyword id="KW-0998">Cell outer membrane</keyword>
<keyword id="KW-0472">Membrane</keyword>
<keyword id="KW-0812">Transmembrane</keyword>
<keyword id="KW-1133">Transmembrane helix</keyword>
<keyword id="KW-0813">Transport</keyword>
<keyword id="KW-0843">Virulence</keyword>
<feature type="chain" id="PRO_0000281410" description="Type IV secretion system protein virB3">
    <location>
        <begin position="1"/>
        <end position="103"/>
    </location>
</feature>
<feature type="transmembrane region" description="Helical" evidence="2">
    <location>
        <begin position="33"/>
        <end position="53"/>
    </location>
</feature>
<feature type="sequence variant" description="In strain: ATCC VR-358 /Fuller / CIP 107027.">
    <original>R</original>
    <variation>RCQL</variation>
    <location>
        <position position="103"/>
    </location>
</feature>
<evidence type="ECO:0000250" key="1"/>
<evidence type="ECO:0000255" key="2"/>
<evidence type="ECO:0000305" key="3"/>
<proteinExistence type="inferred from homology"/>
<sequence length="103" mass="11686">MNEDTLFLACTRPATFAGVTMEGMALNVMATSILFILTSNFTMIGLGIGLHFVLREVTKYDHNQFRVLFAWLNTRGKQKNLTRWGGGSTSPLRLIRTYKELNR</sequence>
<organism>
    <name type="scientific">Bartonella quintana (strain Toulouse)</name>
    <name type="common">Rochalimaea quintana</name>
    <dbReference type="NCBI Taxonomy" id="283165"/>
    <lineage>
        <taxon>Bacteria</taxon>
        <taxon>Pseudomonadati</taxon>
        <taxon>Pseudomonadota</taxon>
        <taxon>Alphaproteobacteria</taxon>
        <taxon>Hyphomicrobiales</taxon>
        <taxon>Bartonellaceae</taxon>
        <taxon>Bartonella</taxon>
    </lineage>
</organism>
<protein>
    <recommendedName>
        <fullName>Type IV secretion system protein virB3</fullName>
    </recommendedName>
</protein>
<reference key="1">
    <citation type="submission" date="2002-06" db="EMBL/GenBank/DDBJ databases">
        <title>Evolution of type IV secretion systems in Bartonella: horizontal transmission and gene conversion.</title>
        <authorList>
            <person name="Alsmark U.C.M."/>
            <person name="Frank A.C."/>
            <person name="Thollesson M."/>
            <person name="Andersson S.G.E."/>
        </authorList>
    </citation>
    <scope>NUCLEOTIDE SEQUENCE [GENOMIC DNA]</scope>
    <source>
        <strain>Toulouse</strain>
    </source>
</reference>
<reference key="2">
    <citation type="submission" date="2003-01" db="EMBL/GenBank/DDBJ databases">
        <title>Genes composing the virB operon of Bartonella quintana.</title>
        <authorList>
            <person name="Kohlhorst D.E."/>
            <person name="Soni T."/>
            <person name="Baumstark B.R."/>
        </authorList>
    </citation>
    <scope>NUCLEOTIDE SEQUENCE [GENOMIC DNA]</scope>
    <source>
        <strain>ATCC VR-358 / Fuller / CIP 107027</strain>
    </source>
</reference>
<reference key="3">
    <citation type="journal article" date="2004" name="Proc. Natl. Acad. Sci. U.S.A.">
        <title>The louse-borne human pathogen Bartonella quintana is a genomic derivative of the zoonotic agent Bartonella henselae.</title>
        <authorList>
            <person name="Alsmark U.C.M."/>
            <person name="Frank A.C."/>
            <person name="Karlberg E.O."/>
            <person name="Legault B.-A."/>
            <person name="Ardell D.H."/>
            <person name="Canbaeck B."/>
            <person name="Eriksson A.-S."/>
            <person name="Naeslund A.K."/>
            <person name="Handley S.A."/>
            <person name="Huvet M."/>
            <person name="La Scola B."/>
            <person name="Holmberg M."/>
            <person name="Andersson S.G.E."/>
        </authorList>
    </citation>
    <scope>NUCLEOTIDE SEQUENCE [LARGE SCALE GENOMIC DNA]</scope>
    <scope>POSSIBLE FUNCTION</scope>
    <source>
        <strain>Toulouse</strain>
    </source>
</reference>